<reference key="1">
    <citation type="journal article" date="2002" name="Nature">
        <title>The genome sequence of Schizosaccharomyces pombe.</title>
        <authorList>
            <person name="Wood V."/>
            <person name="Gwilliam R."/>
            <person name="Rajandream M.A."/>
            <person name="Lyne M.H."/>
            <person name="Lyne R."/>
            <person name="Stewart A."/>
            <person name="Sgouros J.G."/>
            <person name="Peat N."/>
            <person name="Hayles J."/>
            <person name="Baker S.G."/>
            <person name="Basham D."/>
            <person name="Bowman S."/>
            <person name="Brooks K."/>
            <person name="Brown D."/>
            <person name="Brown S."/>
            <person name="Chillingworth T."/>
            <person name="Churcher C.M."/>
            <person name="Collins M."/>
            <person name="Connor R."/>
            <person name="Cronin A."/>
            <person name="Davis P."/>
            <person name="Feltwell T."/>
            <person name="Fraser A."/>
            <person name="Gentles S."/>
            <person name="Goble A."/>
            <person name="Hamlin N."/>
            <person name="Harris D.E."/>
            <person name="Hidalgo J."/>
            <person name="Hodgson G."/>
            <person name="Holroyd S."/>
            <person name="Hornsby T."/>
            <person name="Howarth S."/>
            <person name="Huckle E.J."/>
            <person name="Hunt S."/>
            <person name="Jagels K."/>
            <person name="James K.D."/>
            <person name="Jones L."/>
            <person name="Jones M."/>
            <person name="Leather S."/>
            <person name="McDonald S."/>
            <person name="McLean J."/>
            <person name="Mooney P."/>
            <person name="Moule S."/>
            <person name="Mungall K.L."/>
            <person name="Murphy L.D."/>
            <person name="Niblett D."/>
            <person name="Odell C."/>
            <person name="Oliver K."/>
            <person name="O'Neil S."/>
            <person name="Pearson D."/>
            <person name="Quail M.A."/>
            <person name="Rabbinowitsch E."/>
            <person name="Rutherford K.M."/>
            <person name="Rutter S."/>
            <person name="Saunders D."/>
            <person name="Seeger K."/>
            <person name="Sharp S."/>
            <person name="Skelton J."/>
            <person name="Simmonds M.N."/>
            <person name="Squares R."/>
            <person name="Squares S."/>
            <person name="Stevens K."/>
            <person name="Taylor K."/>
            <person name="Taylor R.G."/>
            <person name="Tivey A."/>
            <person name="Walsh S.V."/>
            <person name="Warren T."/>
            <person name="Whitehead S."/>
            <person name="Woodward J.R."/>
            <person name="Volckaert G."/>
            <person name="Aert R."/>
            <person name="Robben J."/>
            <person name="Grymonprez B."/>
            <person name="Weltjens I."/>
            <person name="Vanstreels E."/>
            <person name="Rieger M."/>
            <person name="Schaefer M."/>
            <person name="Mueller-Auer S."/>
            <person name="Gabel C."/>
            <person name="Fuchs M."/>
            <person name="Duesterhoeft A."/>
            <person name="Fritzc C."/>
            <person name="Holzer E."/>
            <person name="Moestl D."/>
            <person name="Hilbert H."/>
            <person name="Borzym K."/>
            <person name="Langer I."/>
            <person name="Beck A."/>
            <person name="Lehrach H."/>
            <person name="Reinhardt R."/>
            <person name="Pohl T.M."/>
            <person name="Eger P."/>
            <person name="Zimmermann W."/>
            <person name="Wedler H."/>
            <person name="Wambutt R."/>
            <person name="Purnelle B."/>
            <person name="Goffeau A."/>
            <person name="Cadieu E."/>
            <person name="Dreano S."/>
            <person name="Gloux S."/>
            <person name="Lelaure V."/>
            <person name="Mottier S."/>
            <person name="Galibert F."/>
            <person name="Aves S.J."/>
            <person name="Xiang Z."/>
            <person name="Hunt C."/>
            <person name="Moore K."/>
            <person name="Hurst S.M."/>
            <person name="Lucas M."/>
            <person name="Rochet M."/>
            <person name="Gaillardin C."/>
            <person name="Tallada V.A."/>
            <person name="Garzon A."/>
            <person name="Thode G."/>
            <person name="Daga R.R."/>
            <person name="Cruzado L."/>
            <person name="Jimenez J."/>
            <person name="Sanchez M."/>
            <person name="del Rey F."/>
            <person name="Benito J."/>
            <person name="Dominguez A."/>
            <person name="Revuelta J.L."/>
            <person name="Moreno S."/>
            <person name="Armstrong J."/>
            <person name="Forsburg S.L."/>
            <person name="Cerutti L."/>
            <person name="Lowe T."/>
            <person name="McCombie W.R."/>
            <person name="Paulsen I."/>
            <person name="Potashkin J."/>
            <person name="Shpakovski G.V."/>
            <person name="Ussery D."/>
            <person name="Barrell B.G."/>
            <person name="Nurse P."/>
        </authorList>
    </citation>
    <scope>NUCLEOTIDE SEQUENCE [LARGE SCALE GENOMIC DNA]</scope>
    <source>
        <strain>972 / ATCC 24843</strain>
    </source>
</reference>
<reference key="2">
    <citation type="submission" date="1997-04" db="EMBL/GenBank/DDBJ databases">
        <authorList>
            <person name="Jang Y.J."/>
            <person name="Yoo H.S."/>
        </authorList>
    </citation>
    <scope>NUCLEOTIDE SEQUENCE [MRNA] OF 3-77</scope>
    <source>
        <strain>972 / ATCC 24843</strain>
    </source>
</reference>
<reference key="3">
    <citation type="journal article" date="2006" name="Nat. Biotechnol.">
        <title>ORFeome cloning and global analysis of protein localization in the fission yeast Schizosaccharomyces pombe.</title>
        <authorList>
            <person name="Matsuyama A."/>
            <person name="Arai R."/>
            <person name="Yashiroda Y."/>
            <person name="Shirai A."/>
            <person name="Kamata A."/>
            <person name="Sekido S."/>
            <person name="Kobayashi Y."/>
            <person name="Hashimoto A."/>
            <person name="Hamamoto M."/>
            <person name="Hiraoka Y."/>
            <person name="Horinouchi S."/>
            <person name="Yoshida M."/>
        </authorList>
    </citation>
    <scope>SUBCELLULAR LOCATION [LARGE SCALE ANALYSIS]</scope>
</reference>
<protein>
    <recommendedName>
        <fullName evidence="3">Large ribosomal subunit protein eL31</fullName>
    </recommendedName>
    <alternativeName>
        <fullName>60S ribosomal protein L31</fullName>
    </alternativeName>
</protein>
<organism>
    <name type="scientific">Schizosaccharomyces pombe (strain 972 / ATCC 24843)</name>
    <name type="common">Fission yeast</name>
    <dbReference type="NCBI Taxonomy" id="284812"/>
    <lineage>
        <taxon>Eukaryota</taxon>
        <taxon>Fungi</taxon>
        <taxon>Dikarya</taxon>
        <taxon>Ascomycota</taxon>
        <taxon>Taphrinomycotina</taxon>
        <taxon>Schizosaccharomycetes</taxon>
        <taxon>Schizosaccharomycetales</taxon>
        <taxon>Schizosaccharomycetaceae</taxon>
        <taxon>Schizosaccharomyces</taxon>
    </lineage>
</organism>
<proteinExistence type="evidence at protein level"/>
<dbReference type="EMBL" id="CU329670">
    <property type="protein sequence ID" value="CAB63499.1"/>
    <property type="molecule type" value="Genomic_DNA"/>
</dbReference>
<dbReference type="EMBL" id="U97381">
    <property type="protein sequence ID" value="AAB63873.1"/>
    <property type="molecule type" value="mRNA"/>
</dbReference>
<dbReference type="PIR" id="T50264">
    <property type="entry name" value="T50264"/>
</dbReference>
<dbReference type="RefSeq" id="NP_594826.1">
    <property type="nucleotide sequence ID" value="NM_001020255.2"/>
</dbReference>
<dbReference type="PDB" id="8ESQ">
    <property type="method" value="EM"/>
    <property type="resolution" value="2.80 A"/>
    <property type="chains" value="d=1-113"/>
</dbReference>
<dbReference type="PDB" id="8ESR">
    <property type="method" value="EM"/>
    <property type="resolution" value="3.20 A"/>
    <property type="chains" value="d=1-113"/>
</dbReference>
<dbReference type="PDB" id="8ETC">
    <property type="method" value="EM"/>
    <property type="resolution" value="3.10 A"/>
    <property type="chains" value="d=1-113"/>
</dbReference>
<dbReference type="PDB" id="8ETG">
    <property type="method" value="EM"/>
    <property type="resolution" value="3.40 A"/>
    <property type="chains" value="d=1-113"/>
</dbReference>
<dbReference type="PDB" id="8ETI">
    <property type="method" value="EM"/>
    <property type="resolution" value="3.70 A"/>
    <property type="chains" value="d=1-113"/>
</dbReference>
<dbReference type="PDB" id="8ETJ">
    <property type="method" value="EM"/>
    <property type="resolution" value="3.20 A"/>
    <property type="chains" value="d=1-113"/>
</dbReference>
<dbReference type="PDB" id="8EUG">
    <property type="method" value="EM"/>
    <property type="resolution" value="2.80 A"/>
    <property type="chains" value="d=1-113"/>
</dbReference>
<dbReference type="PDB" id="8EUI">
    <property type="method" value="EM"/>
    <property type="resolution" value="3.10 A"/>
    <property type="chains" value="d=1-113"/>
</dbReference>
<dbReference type="PDB" id="9AXT">
    <property type="method" value="EM"/>
    <property type="resolution" value="2.40 A"/>
    <property type="chains" value="Bp=1-113"/>
</dbReference>
<dbReference type="PDB" id="9AXU">
    <property type="method" value="EM"/>
    <property type="resolution" value="1.94 A"/>
    <property type="chains" value="p=1-113"/>
</dbReference>
<dbReference type="PDB" id="9AXV">
    <property type="method" value="EM"/>
    <property type="resolution" value="2.40 A"/>
    <property type="chains" value="Bp=1-113"/>
</dbReference>
<dbReference type="PDBsum" id="8ESQ"/>
<dbReference type="PDBsum" id="8ESR"/>
<dbReference type="PDBsum" id="8ETC"/>
<dbReference type="PDBsum" id="8ETG"/>
<dbReference type="PDBsum" id="8ETI"/>
<dbReference type="PDBsum" id="8ETJ"/>
<dbReference type="PDBsum" id="8EUG"/>
<dbReference type="PDBsum" id="8EUI"/>
<dbReference type="PDBsum" id="9AXT"/>
<dbReference type="PDBsum" id="9AXU"/>
<dbReference type="PDBsum" id="9AXV"/>
<dbReference type="EMDB" id="EMD-43972"/>
<dbReference type="EMDB" id="EMD-43973"/>
<dbReference type="EMDB" id="EMD-43976"/>
<dbReference type="SMR" id="Q9URX6"/>
<dbReference type="BioGRID" id="279895">
    <property type="interactions" value="10"/>
</dbReference>
<dbReference type="FunCoup" id="Q9URX6">
    <property type="interactions" value="476"/>
</dbReference>
<dbReference type="IntAct" id="Q9URX6">
    <property type="interactions" value="1"/>
</dbReference>
<dbReference type="STRING" id="284812.Q9URX6"/>
<dbReference type="iPTMnet" id="Q9URX6"/>
<dbReference type="PaxDb" id="4896-SPAC890.08.1"/>
<dbReference type="EnsemblFungi" id="SPAC890.08.1">
    <property type="protein sequence ID" value="SPAC890.08.1:pep"/>
    <property type="gene ID" value="SPAC890.08"/>
</dbReference>
<dbReference type="GeneID" id="2543475"/>
<dbReference type="KEGG" id="spo:2543475"/>
<dbReference type="PomBase" id="SPAC890.08">
    <property type="gene designation" value="rpl31"/>
</dbReference>
<dbReference type="VEuPathDB" id="FungiDB:SPAC890.08"/>
<dbReference type="eggNOG" id="KOG0893">
    <property type="taxonomic scope" value="Eukaryota"/>
</dbReference>
<dbReference type="HOGENOM" id="CLU_112570_1_1_1"/>
<dbReference type="InParanoid" id="Q9URX6"/>
<dbReference type="OMA" id="EVWKQGI"/>
<dbReference type="PhylomeDB" id="Q9URX6"/>
<dbReference type="Reactome" id="R-SPO-156827">
    <property type="pathway name" value="L13a-mediated translational silencing of Ceruloplasmin expression"/>
</dbReference>
<dbReference type="Reactome" id="R-SPO-1799339">
    <property type="pathway name" value="SRP-dependent cotranslational protein targeting to membrane"/>
</dbReference>
<dbReference type="Reactome" id="R-SPO-72689">
    <property type="pathway name" value="Formation of a pool of free 40S subunits"/>
</dbReference>
<dbReference type="Reactome" id="R-SPO-72706">
    <property type="pathway name" value="GTP hydrolysis and joining of the 60S ribosomal subunit"/>
</dbReference>
<dbReference type="Reactome" id="R-SPO-975956">
    <property type="pathway name" value="Nonsense Mediated Decay (NMD) independent of the Exon Junction Complex (EJC)"/>
</dbReference>
<dbReference type="Reactome" id="R-SPO-975957">
    <property type="pathway name" value="Nonsense Mediated Decay (NMD) enhanced by the Exon Junction Complex (EJC)"/>
</dbReference>
<dbReference type="PRO" id="PR:Q9URX6"/>
<dbReference type="Proteomes" id="UP000002485">
    <property type="component" value="Chromosome I"/>
</dbReference>
<dbReference type="GO" id="GO:0005829">
    <property type="term" value="C:cytosol"/>
    <property type="evidence" value="ECO:0007005"/>
    <property type="project" value="PomBase"/>
</dbReference>
<dbReference type="GO" id="GO:0022625">
    <property type="term" value="C:cytosolic large ribosomal subunit"/>
    <property type="evidence" value="ECO:0000269"/>
    <property type="project" value="PomBase"/>
</dbReference>
<dbReference type="GO" id="GO:0030684">
    <property type="term" value="C:preribosome"/>
    <property type="evidence" value="ECO:0000314"/>
    <property type="project" value="PomBase"/>
</dbReference>
<dbReference type="GO" id="GO:0003735">
    <property type="term" value="F:structural constituent of ribosome"/>
    <property type="evidence" value="ECO:0000318"/>
    <property type="project" value="GO_Central"/>
</dbReference>
<dbReference type="GO" id="GO:0002181">
    <property type="term" value="P:cytoplasmic translation"/>
    <property type="evidence" value="ECO:0000318"/>
    <property type="project" value="GO_Central"/>
</dbReference>
<dbReference type="CDD" id="cd00463">
    <property type="entry name" value="Ribosomal_L31e"/>
    <property type="match status" value="1"/>
</dbReference>
<dbReference type="FunFam" id="3.10.440.10:FF:000001">
    <property type="entry name" value="60S ribosomal protein L31"/>
    <property type="match status" value="1"/>
</dbReference>
<dbReference type="Gene3D" id="3.10.440.10">
    <property type="match status" value="1"/>
</dbReference>
<dbReference type="InterPro" id="IPR000054">
    <property type="entry name" value="Ribosomal_eL31"/>
</dbReference>
<dbReference type="InterPro" id="IPR020052">
    <property type="entry name" value="Ribosomal_eL31_CS"/>
</dbReference>
<dbReference type="InterPro" id="IPR023621">
    <property type="entry name" value="Ribosomal_eL31_dom_sf"/>
</dbReference>
<dbReference type="PANTHER" id="PTHR10956">
    <property type="entry name" value="60S RIBOSOMAL PROTEIN L31"/>
    <property type="match status" value="1"/>
</dbReference>
<dbReference type="PANTHER" id="PTHR10956:SF0">
    <property type="entry name" value="60S RIBOSOMAL PROTEIN L31"/>
    <property type="match status" value="1"/>
</dbReference>
<dbReference type="Pfam" id="PF01198">
    <property type="entry name" value="Ribosomal_L31e"/>
    <property type="match status" value="1"/>
</dbReference>
<dbReference type="SMART" id="SM01380">
    <property type="entry name" value="Ribosomal_L31e"/>
    <property type="match status" value="1"/>
</dbReference>
<dbReference type="SUPFAM" id="SSF54575">
    <property type="entry name" value="Ribosomal protein L31e"/>
    <property type="match status" value="1"/>
</dbReference>
<dbReference type="PROSITE" id="PS01144">
    <property type="entry name" value="RIBOSOMAL_L31E"/>
    <property type="match status" value="1"/>
</dbReference>
<feature type="chain" id="PRO_0000153787" description="Large ribosomal subunit protein eL31">
    <location>
        <begin position="1"/>
        <end position="113"/>
    </location>
</feature>
<feature type="sequence conflict" description="In Ref. 2; AAB63873." evidence="3" ref="2">
    <original>R</original>
    <variation>G</variation>
    <location>
        <position position="77"/>
    </location>
</feature>
<feature type="strand" evidence="4">
    <location>
        <begin position="14"/>
        <end position="20"/>
    </location>
</feature>
<feature type="helix" evidence="4">
    <location>
        <begin position="21"/>
        <end position="24"/>
    </location>
</feature>
<feature type="turn" evidence="5">
    <location>
        <begin position="25"/>
        <end position="27"/>
    </location>
</feature>
<feature type="helix" evidence="4">
    <location>
        <begin position="30"/>
        <end position="32"/>
    </location>
</feature>
<feature type="helix" evidence="4">
    <location>
        <begin position="33"/>
        <end position="49"/>
    </location>
</feature>
<feature type="strand" evidence="4">
    <location>
        <begin position="54"/>
        <end position="56"/>
    </location>
</feature>
<feature type="helix" evidence="4">
    <location>
        <begin position="58"/>
        <end position="64"/>
    </location>
</feature>
<feature type="turn" evidence="4">
    <location>
        <begin position="65"/>
        <end position="67"/>
    </location>
</feature>
<feature type="strand" evidence="4">
    <location>
        <begin position="74"/>
        <end position="81"/>
    </location>
</feature>
<feature type="strand" evidence="4">
    <location>
        <begin position="94"/>
        <end position="98"/>
    </location>
</feature>
<feature type="strand" evidence="5">
    <location>
        <begin position="109"/>
        <end position="111"/>
    </location>
</feature>
<sequence>MANTKKSAINQVVTRDYTIHMHKRLYGVSFKKRAPRAIKEIVAFAQKHMQTKEVRVDPSLNKEVWKRGIRNVPHRLRLRLSRKRSDEDDKALYTYVQAVDVANPKMETTVVEE</sequence>
<name>RL31_SCHPO</name>
<accession>Q9URX6</accession>
<accession>O14384</accession>
<evidence type="ECO:0000250" key="1">
    <source>
        <dbReference type="UniProtKB" id="P0C2H8"/>
    </source>
</evidence>
<evidence type="ECO:0000269" key="2">
    <source>
    </source>
</evidence>
<evidence type="ECO:0000305" key="3"/>
<evidence type="ECO:0007829" key="4">
    <source>
        <dbReference type="PDB" id="8ETC"/>
    </source>
</evidence>
<evidence type="ECO:0007829" key="5">
    <source>
        <dbReference type="PDB" id="8ETG"/>
    </source>
</evidence>
<comment type="function">
    <text evidence="1">Component of the ribosome, a large ribonucleoprotein complex responsible for the synthesis of proteins in the cell. The small ribosomal subunit (SSU) binds messenger RNAs (mRNAs) and translates the encoded message by selecting cognate aminoacyl-transfer RNA (tRNA) molecules. The large subunit (LSU) contains the ribosomal catalytic site termed the peptidyl transferase center (PTC), which catalyzes the formation of peptide bonds, thereby polymerizing the amino acids delivered by tRNAs into a polypeptide chain. The nascent polypeptides leave the ribosome through a tunnel in the LSU and interact with protein factors that function in enzymatic processing, targeting, and the membrane insertion of nascent chains at the exit of the ribosomal tunnel.</text>
</comment>
<comment type="subunit">
    <text evidence="1">Component of the large ribosomal subunit (LSU). Mature yeast ribosomes consist of a small (40S) and a large (60S) subunit. The 40S small subunit contains 1 molecule of ribosomal RNA (18S rRNA) and at least 33 different proteins. The large 60S subunit contains 3 rRNA molecules (25S, 5.8S and 5S rRNA) and at least 46 different proteins.</text>
</comment>
<comment type="subcellular location">
    <subcellularLocation>
        <location evidence="2">Cytoplasm</location>
    </subcellularLocation>
</comment>
<comment type="similarity">
    <text evidence="3">Belongs to the eukaryotic ribosomal protein eL31 family.</text>
</comment>
<gene>
    <name type="primary">rpl31</name>
    <name type="ORF">SPAC890.08</name>
</gene>
<keyword id="KW-0002">3D-structure</keyword>
<keyword id="KW-0963">Cytoplasm</keyword>
<keyword id="KW-1185">Reference proteome</keyword>
<keyword id="KW-0687">Ribonucleoprotein</keyword>
<keyword id="KW-0689">Ribosomal protein</keyword>